<dbReference type="EMBL" id="CP000124">
    <property type="protein sequence ID" value="ABA49256.1"/>
    <property type="molecule type" value="Genomic_DNA"/>
</dbReference>
<dbReference type="RefSeq" id="WP_004186076.1">
    <property type="nucleotide sequence ID" value="NC_007434.1"/>
</dbReference>
<dbReference type="SMR" id="Q3JPR4"/>
<dbReference type="EnsemblBacteria" id="ABA49256">
    <property type="protein sequence ID" value="ABA49256"/>
    <property type="gene ID" value="BURPS1710b_3065"/>
</dbReference>
<dbReference type="GeneID" id="93061170"/>
<dbReference type="KEGG" id="bpm:BURPS1710b_3065"/>
<dbReference type="HOGENOM" id="CLU_137929_2_1_4"/>
<dbReference type="Proteomes" id="UP000002700">
    <property type="component" value="Chromosome I"/>
</dbReference>
<dbReference type="GO" id="GO:0051301">
    <property type="term" value="P:cell division"/>
    <property type="evidence" value="ECO:0007669"/>
    <property type="project" value="UniProtKB-KW"/>
</dbReference>
<dbReference type="GO" id="GO:0032955">
    <property type="term" value="P:regulation of division septum assembly"/>
    <property type="evidence" value="ECO:0007669"/>
    <property type="project" value="InterPro"/>
</dbReference>
<dbReference type="FunFam" id="3.30.1070.10:FF:000001">
    <property type="entry name" value="Cell division topological specificity factor"/>
    <property type="match status" value="1"/>
</dbReference>
<dbReference type="Gene3D" id="3.30.1070.10">
    <property type="entry name" value="Cell division topological specificity factor MinE"/>
    <property type="match status" value="1"/>
</dbReference>
<dbReference type="HAMAP" id="MF_00262">
    <property type="entry name" value="MinE"/>
    <property type="match status" value="1"/>
</dbReference>
<dbReference type="InterPro" id="IPR005527">
    <property type="entry name" value="MinE"/>
</dbReference>
<dbReference type="InterPro" id="IPR036707">
    <property type="entry name" value="MinE_sf"/>
</dbReference>
<dbReference type="NCBIfam" id="TIGR01215">
    <property type="entry name" value="minE"/>
    <property type="match status" value="1"/>
</dbReference>
<dbReference type="NCBIfam" id="NF001422">
    <property type="entry name" value="PRK00296.1"/>
    <property type="match status" value="1"/>
</dbReference>
<dbReference type="NCBIfam" id="NF010595">
    <property type="entry name" value="PRK13989.1"/>
    <property type="match status" value="1"/>
</dbReference>
<dbReference type="Pfam" id="PF03776">
    <property type="entry name" value="MinE"/>
    <property type="match status" value="1"/>
</dbReference>
<dbReference type="SUPFAM" id="SSF55229">
    <property type="entry name" value="Cell division protein MinE topological specificity domain"/>
    <property type="match status" value="1"/>
</dbReference>
<comment type="function">
    <text evidence="1">Prevents the cell division inhibition by proteins MinC and MinD at internal division sites while permitting inhibition at polar sites. This ensures cell division at the proper site by restricting the formation of a division septum at the midpoint of the long axis of the cell.</text>
</comment>
<comment type="similarity">
    <text evidence="1">Belongs to the MinE family.</text>
</comment>
<sequence>MSILSFLLGEKKKSAAVAKERLQLIIAHERVGGRPPADYLPALQKELVAVISKYVKISNDDIRVSLERQDDLEVLEVKIEIPQA</sequence>
<organism>
    <name type="scientific">Burkholderia pseudomallei (strain 1710b)</name>
    <dbReference type="NCBI Taxonomy" id="320372"/>
    <lineage>
        <taxon>Bacteria</taxon>
        <taxon>Pseudomonadati</taxon>
        <taxon>Pseudomonadota</taxon>
        <taxon>Betaproteobacteria</taxon>
        <taxon>Burkholderiales</taxon>
        <taxon>Burkholderiaceae</taxon>
        <taxon>Burkholderia</taxon>
        <taxon>pseudomallei group</taxon>
    </lineage>
</organism>
<name>MINE_BURP1</name>
<accession>Q3JPR4</accession>
<keyword id="KW-0131">Cell cycle</keyword>
<keyword id="KW-0132">Cell division</keyword>
<protein>
    <recommendedName>
        <fullName evidence="1">Cell division topological specificity factor</fullName>
    </recommendedName>
</protein>
<evidence type="ECO:0000255" key="1">
    <source>
        <dbReference type="HAMAP-Rule" id="MF_00262"/>
    </source>
</evidence>
<feature type="chain" id="PRO_0000298092" description="Cell division topological specificity factor">
    <location>
        <begin position="1"/>
        <end position="84"/>
    </location>
</feature>
<reference key="1">
    <citation type="journal article" date="2010" name="Genome Biol. Evol.">
        <title>Continuing evolution of Burkholderia mallei through genome reduction and large-scale rearrangements.</title>
        <authorList>
            <person name="Losada L."/>
            <person name="Ronning C.M."/>
            <person name="DeShazer D."/>
            <person name="Woods D."/>
            <person name="Fedorova N."/>
            <person name="Kim H.S."/>
            <person name="Shabalina S.A."/>
            <person name="Pearson T.R."/>
            <person name="Brinkac L."/>
            <person name="Tan P."/>
            <person name="Nandi T."/>
            <person name="Crabtree J."/>
            <person name="Badger J."/>
            <person name="Beckstrom-Sternberg S."/>
            <person name="Saqib M."/>
            <person name="Schutzer S.E."/>
            <person name="Keim P."/>
            <person name="Nierman W.C."/>
        </authorList>
    </citation>
    <scope>NUCLEOTIDE SEQUENCE [LARGE SCALE GENOMIC DNA]</scope>
    <source>
        <strain>1710b</strain>
    </source>
</reference>
<proteinExistence type="inferred from homology"/>
<gene>
    <name evidence="1" type="primary">minE</name>
    <name type="ordered locus">BURPS1710b_3065</name>
</gene>